<accession>P9WP49</accession>
<accession>A7Y0H9</accession>
<accession>F2GHV9</accession>
<accession>P71543</accession>
<accession>Q7D919</accession>
<gene>
    <name type="primary">csoR</name>
    <name type="synonym">croR</name>
    <name type="ordered locus">Rv0967</name>
</gene>
<feature type="chain" id="PRO_0000295581" description="Copper-sensing transcriptional repressor CsoR">
    <location>
        <begin position="1"/>
        <end position="119"/>
    </location>
</feature>
<feature type="region of interest" description="Disordered" evidence="1">
    <location>
        <begin position="99"/>
        <end position="119"/>
    </location>
</feature>
<feature type="binding site" description="in other chain" evidence="3">
    <location>
        <position position="36"/>
    </location>
    <ligand>
        <name>Cu cation</name>
        <dbReference type="ChEBI" id="CHEBI:23378"/>
        <note>ligand shared between dimeric partners</note>
    </ligand>
</feature>
<feature type="binding site" evidence="3">
    <location>
        <position position="61"/>
    </location>
    <ligand>
        <name>Cu cation</name>
        <dbReference type="ChEBI" id="CHEBI:23378"/>
        <note>ligand shared between dimeric partners</note>
    </ligand>
</feature>
<feature type="binding site" evidence="3">
    <location>
        <position position="65"/>
    </location>
    <ligand>
        <name>Cu cation</name>
        <dbReference type="ChEBI" id="CHEBI:23378"/>
        <note>ligand shared between dimeric partners</note>
    </ligand>
</feature>
<feature type="mutagenesis site" description="Loss of ability to bind to DNA; when associated with A-36 and A-52." evidence="3">
    <original>R</original>
    <variation>A</variation>
    <location>
        <position position="15"/>
    </location>
</feature>
<feature type="mutagenesis site" description="No effect in ability to bind copper." evidence="3">
    <original>Y</original>
    <variation>F</variation>
    <location>
        <position position="35"/>
    </location>
</feature>
<feature type="mutagenesis site" description="Loss of ability to bind copper; loss of ability to dissociate from DNA in the presence of copper." evidence="3">
    <original>C</original>
    <variation>A</variation>
    <location>
        <position position="36"/>
    </location>
</feature>
<feature type="mutagenesis site" description="Loss of ability to bind to DNA; when associated with A-15 and A-52." evidence="3">
    <original>C</original>
    <variation>A</variation>
    <location>
        <position position="36"/>
    </location>
</feature>
<feature type="mutagenesis site" description="Loss of ability to bind to DNA; when associated with A-15 and A-36." evidence="3">
    <original>R</original>
    <variation>A</variation>
    <location>
        <position position="52"/>
    </location>
</feature>
<feature type="mutagenesis site" description="Loss of ability to bind copper; loss of ability to dissociate from DNA in the presence of copper." evidence="3">
    <original>H</original>
    <variation>A</variation>
    <location>
        <position position="61"/>
    </location>
</feature>
<feature type="mutagenesis site" description="Decrease in ability to dissociate from DNA in the presence of copper." evidence="3">
    <original>E</original>
    <variation>A</variation>
    <location>
        <position position="81"/>
    </location>
</feature>
<feature type="helix" evidence="5">
    <location>
        <begin position="7"/>
        <end position="31"/>
    </location>
</feature>
<feature type="helix" evidence="5">
    <location>
        <begin position="36"/>
        <end position="63"/>
    </location>
</feature>
<feature type="turn" evidence="5">
    <location>
        <begin position="64"/>
        <end position="68"/>
    </location>
</feature>
<feature type="helix" evidence="5">
    <location>
        <begin position="74"/>
        <end position="84"/>
    </location>
</feature>
<dbReference type="EMBL" id="DQ778958">
    <property type="protein sequence ID" value="ABG82022.1"/>
    <property type="molecule type" value="Genomic_DNA"/>
</dbReference>
<dbReference type="EMBL" id="AL123456">
    <property type="protein sequence ID" value="CCP43716.1"/>
    <property type="molecule type" value="Genomic_DNA"/>
</dbReference>
<dbReference type="PIR" id="E70718">
    <property type="entry name" value="E70718"/>
</dbReference>
<dbReference type="RefSeq" id="NP_215482.1">
    <property type="nucleotide sequence ID" value="NC_000962.3"/>
</dbReference>
<dbReference type="RefSeq" id="WP_003404935.1">
    <property type="nucleotide sequence ID" value="NZ_NVQJ01000001.1"/>
</dbReference>
<dbReference type="PDB" id="2HH7">
    <property type="method" value="X-ray"/>
    <property type="resolution" value="2.55 A"/>
    <property type="chains" value="A=1-119"/>
</dbReference>
<dbReference type="PDBsum" id="2HH7"/>
<dbReference type="SMR" id="P9WP49"/>
<dbReference type="FunCoup" id="P9WP49">
    <property type="interactions" value="2"/>
</dbReference>
<dbReference type="STRING" id="83332.Rv0967"/>
<dbReference type="PaxDb" id="83332-Rv0967"/>
<dbReference type="DNASU" id="885312"/>
<dbReference type="GeneID" id="885312"/>
<dbReference type="KEGG" id="mtu:Rv0967"/>
<dbReference type="KEGG" id="mtv:RVBD_0967"/>
<dbReference type="TubercuList" id="Rv0967"/>
<dbReference type="eggNOG" id="COG1937">
    <property type="taxonomic scope" value="Bacteria"/>
</dbReference>
<dbReference type="InParanoid" id="P9WP49"/>
<dbReference type="OrthoDB" id="9811244at2"/>
<dbReference type="PhylomeDB" id="P9WP49"/>
<dbReference type="EvolutionaryTrace" id="P9WP49"/>
<dbReference type="Proteomes" id="UP000001584">
    <property type="component" value="Chromosome"/>
</dbReference>
<dbReference type="CollecTF" id="EXPREG_00000c70"/>
<dbReference type="GO" id="GO:0005737">
    <property type="term" value="C:cytoplasm"/>
    <property type="evidence" value="ECO:0007669"/>
    <property type="project" value="UniProtKB-SubCell"/>
</dbReference>
<dbReference type="GO" id="GO:0005886">
    <property type="term" value="C:plasma membrane"/>
    <property type="evidence" value="ECO:0007005"/>
    <property type="project" value="MTBBASE"/>
</dbReference>
<dbReference type="GO" id="GO:0032993">
    <property type="term" value="C:protein-DNA complex"/>
    <property type="evidence" value="ECO:0000269"/>
    <property type="project" value="CollecTF"/>
</dbReference>
<dbReference type="GO" id="GO:0005507">
    <property type="term" value="F:copper ion binding"/>
    <property type="evidence" value="ECO:0000314"/>
    <property type="project" value="MTBBASE"/>
</dbReference>
<dbReference type="GO" id="GO:0097077">
    <property type="term" value="F:copper ion sensor activity"/>
    <property type="evidence" value="ECO:0000314"/>
    <property type="project" value="MTBBASE"/>
</dbReference>
<dbReference type="GO" id="GO:0003677">
    <property type="term" value="F:DNA binding"/>
    <property type="evidence" value="ECO:0000314"/>
    <property type="project" value="MTBBASE"/>
</dbReference>
<dbReference type="GO" id="GO:0001217">
    <property type="term" value="F:DNA-binding transcription repressor activity"/>
    <property type="evidence" value="ECO:0000269"/>
    <property type="project" value="CollecTF"/>
</dbReference>
<dbReference type="GO" id="GO:0000976">
    <property type="term" value="F:transcription cis-regulatory region binding"/>
    <property type="evidence" value="ECO:0000269"/>
    <property type="project" value="CollecTF"/>
</dbReference>
<dbReference type="GO" id="GO:0045892">
    <property type="term" value="P:negative regulation of DNA-templated transcription"/>
    <property type="evidence" value="ECO:0000270"/>
    <property type="project" value="CollecTF"/>
</dbReference>
<dbReference type="GO" id="GO:0046688">
    <property type="term" value="P:response to copper ion"/>
    <property type="evidence" value="ECO:0000314"/>
    <property type="project" value="MTBBASE"/>
</dbReference>
<dbReference type="GO" id="GO:0010272">
    <property type="term" value="P:response to silver ion"/>
    <property type="evidence" value="ECO:0000314"/>
    <property type="project" value="MTBBASE"/>
</dbReference>
<dbReference type="CDD" id="cd10151">
    <property type="entry name" value="TthCsoR-like_DUF156"/>
    <property type="match status" value="1"/>
</dbReference>
<dbReference type="FunFam" id="1.20.58.1000:FF:000004">
    <property type="entry name" value="Copper-sensing transcriptional repressor CsoR"/>
    <property type="match status" value="1"/>
</dbReference>
<dbReference type="Gene3D" id="1.20.58.1000">
    <property type="entry name" value="Metal-sensitive repressor, helix protomer"/>
    <property type="match status" value="1"/>
</dbReference>
<dbReference type="InterPro" id="IPR003735">
    <property type="entry name" value="Metal_Tscrpt_repr"/>
</dbReference>
<dbReference type="InterPro" id="IPR038390">
    <property type="entry name" value="Metal_Tscrpt_repr_sf"/>
</dbReference>
<dbReference type="PANTHER" id="PTHR33677:SF4">
    <property type="entry name" value="COPPER-SENSING TRANSCRIPTIONAL REPRESSOR CSOR"/>
    <property type="match status" value="1"/>
</dbReference>
<dbReference type="PANTHER" id="PTHR33677">
    <property type="entry name" value="TRANSCRIPTIONAL REPRESSOR FRMR-RELATED"/>
    <property type="match status" value="1"/>
</dbReference>
<dbReference type="Pfam" id="PF02583">
    <property type="entry name" value="Trns_repr_metal"/>
    <property type="match status" value="1"/>
</dbReference>
<evidence type="ECO:0000256" key="1">
    <source>
        <dbReference type="SAM" id="MobiDB-lite"/>
    </source>
</evidence>
<evidence type="ECO:0000269" key="2">
    <source>
    </source>
</evidence>
<evidence type="ECO:0000269" key="3">
    <source>
    </source>
</evidence>
<evidence type="ECO:0000305" key="4"/>
<evidence type="ECO:0007829" key="5">
    <source>
        <dbReference type="PDB" id="2HH7"/>
    </source>
</evidence>
<comment type="function">
    <text evidence="3">Copper-sensitive repressor that has a key role in copper homeostasis. It is part of the cso operon involved in the cellular response to increasing concentrations of copper inside the bacterium, which can be highly toxic. In the presence of copper, CsoR fully dissociates from the promoter in the cso operon, leading to the transcription of its genes. Binds to a GC-rich pseudopallindromic sequence, 5'-GTAGCCCACCCCCAGTGGGGTGGGA-3', in the cso promoter region.</text>
</comment>
<comment type="subunit">
    <text evidence="3">Homodimer.</text>
</comment>
<comment type="subcellular location">
    <subcellularLocation>
        <location evidence="4">Cytoplasm</location>
    </subcellularLocation>
</comment>
<comment type="induction">
    <text evidence="2">Highly up-regulated during the early stages of invasion of the human blood-brain barrier.</text>
</comment>
<comment type="domain">
    <text>This protein has an antiparallel four-helix bundle architecture that represents a novel DNA-binding fold.</text>
</comment>
<comment type="similarity">
    <text evidence="4">Belongs to the CsoR family.</text>
</comment>
<sequence>MSKELTAKKRAALNRLKTVRGHLDGIVRMLESDAYCVDVMKQISAVQSSLERANRVMLHNHLETCFSTAVLDGHGQAAIEELIDAVKFTPALTGPHARLGGAAVGESATEEPMPDASNM</sequence>
<keyword id="KW-0002">3D-structure</keyword>
<keyword id="KW-0186">Copper</keyword>
<keyword id="KW-0963">Cytoplasm</keyword>
<keyword id="KW-0238">DNA-binding</keyword>
<keyword id="KW-0479">Metal-binding</keyword>
<keyword id="KW-1185">Reference proteome</keyword>
<keyword id="KW-0678">Repressor</keyword>
<keyword id="KW-0804">Transcription</keyword>
<keyword id="KW-0805">Transcription regulation</keyword>
<reference key="1">
    <citation type="submission" date="2006-06" db="EMBL/GenBank/DDBJ databases">
        <title>A novel family of Cu-specific metal sensing transcriptional regulators: M. tuberculosis CpvR.</title>
        <authorList>
            <person name="Liu T."/>
            <person name="Ramesh A."/>
            <person name="Zhang L."/>
            <person name="George G.N."/>
            <person name="Talaat A.M."/>
            <person name="Sacchettini J.C."/>
            <person name="Giedroc D.P."/>
        </authorList>
    </citation>
    <scope>NUCLEOTIDE SEQUENCE [GENOMIC DNA]</scope>
</reference>
<reference key="2">
    <citation type="journal article" date="1998" name="Nature">
        <title>Deciphering the biology of Mycobacterium tuberculosis from the complete genome sequence.</title>
        <authorList>
            <person name="Cole S.T."/>
            <person name="Brosch R."/>
            <person name="Parkhill J."/>
            <person name="Garnier T."/>
            <person name="Churcher C.M."/>
            <person name="Harris D.E."/>
            <person name="Gordon S.V."/>
            <person name="Eiglmeier K."/>
            <person name="Gas S."/>
            <person name="Barry C.E. III"/>
            <person name="Tekaia F."/>
            <person name="Badcock K."/>
            <person name="Basham D."/>
            <person name="Brown D."/>
            <person name="Chillingworth T."/>
            <person name="Connor R."/>
            <person name="Davies R.M."/>
            <person name="Devlin K."/>
            <person name="Feltwell T."/>
            <person name="Gentles S."/>
            <person name="Hamlin N."/>
            <person name="Holroyd S."/>
            <person name="Hornsby T."/>
            <person name="Jagels K."/>
            <person name="Krogh A."/>
            <person name="McLean J."/>
            <person name="Moule S."/>
            <person name="Murphy L.D."/>
            <person name="Oliver S."/>
            <person name="Osborne J."/>
            <person name="Quail M.A."/>
            <person name="Rajandream M.A."/>
            <person name="Rogers J."/>
            <person name="Rutter S."/>
            <person name="Seeger K."/>
            <person name="Skelton S."/>
            <person name="Squares S."/>
            <person name="Squares R."/>
            <person name="Sulston J.E."/>
            <person name="Taylor K."/>
            <person name="Whitehead S."/>
            <person name="Barrell B.G."/>
        </authorList>
    </citation>
    <scope>NUCLEOTIDE SEQUENCE [LARGE SCALE GENOMIC DNA]</scope>
    <source>
        <strain>ATCC 25618 / H37Rv</strain>
    </source>
</reference>
<reference key="3">
    <citation type="journal article" date="2006" name="J. Infect. Dis.">
        <title>Mycobacterium tuberculosis invasion and traversal across an in vitro human blood-brain barrier as a pathogenic mechanism for central nervous system tuberculosis.</title>
        <authorList>
            <person name="Jain S.K."/>
            <person name="Paul-Satyaseela M."/>
            <person name="Lamichhane G."/>
            <person name="Kim K.S."/>
            <person name="Bishai W.R."/>
        </authorList>
    </citation>
    <scope>INDUCTION</scope>
    <source>
        <strain>ATCC 25618 / H37Rv</strain>
    </source>
</reference>
<reference key="4">
    <citation type="journal article" date="2011" name="Mol. Cell. Proteomics">
        <title>Proteogenomic analysis of Mycobacterium tuberculosis by high resolution mass spectrometry.</title>
        <authorList>
            <person name="Kelkar D.S."/>
            <person name="Kumar D."/>
            <person name="Kumar P."/>
            <person name="Balakrishnan L."/>
            <person name="Muthusamy B."/>
            <person name="Yadav A.K."/>
            <person name="Shrivastava P."/>
            <person name="Marimuthu A."/>
            <person name="Anand S."/>
            <person name="Sundaram H."/>
            <person name="Kingsbury R."/>
            <person name="Harsha H.C."/>
            <person name="Nair B."/>
            <person name="Prasad T.S."/>
            <person name="Chauhan D.S."/>
            <person name="Katoch K."/>
            <person name="Katoch V.M."/>
            <person name="Kumar P."/>
            <person name="Chaerkady R."/>
            <person name="Ramachandran S."/>
            <person name="Dash D."/>
            <person name="Pandey A."/>
        </authorList>
    </citation>
    <scope>IDENTIFICATION BY MASS SPECTROMETRY [LARGE SCALE ANALYSIS]</scope>
    <source>
        <strain>ATCC 25618 / H37Rv</strain>
    </source>
</reference>
<reference key="5">
    <citation type="journal article" date="2007" name="Nat. Chem. Biol.">
        <title>CsoR is a novel Mycobacterium tuberculosis copper-sensing transcriptional regulator.</title>
        <authorList>
            <person name="Liu T."/>
            <person name="Ramesh A."/>
            <person name="Ma Z."/>
            <person name="Ward S.K."/>
            <person name="Zhang L."/>
            <person name="George G.N."/>
            <person name="Talaat A.M."/>
            <person name="Sacchettini J.C."/>
            <person name="Giedroc D.P."/>
        </authorList>
    </citation>
    <scope>X-RAY CRYSTALLOGRAPHY (2.55 ANGSTROMS) IN COMPLEX WITH COPPER ION</scope>
    <scope>FUNCTION</scope>
    <scope>SUBUNIT</scope>
    <scope>MUTAGENESIS OF ARG-15; TYR-35; CYS-36; ARG-52; HIS-61 AND GLU-81</scope>
    <source>
        <strain>ATCC 25618 / H37Rv</strain>
    </source>
</reference>
<organism>
    <name type="scientific">Mycobacterium tuberculosis (strain ATCC 25618 / H37Rv)</name>
    <dbReference type="NCBI Taxonomy" id="83332"/>
    <lineage>
        <taxon>Bacteria</taxon>
        <taxon>Bacillati</taxon>
        <taxon>Actinomycetota</taxon>
        <taxon>Actinomycetes</taxon>
        <taxon>Mycobacteriales</taxon>
        <taxon>Mycobacteriaceae</taxon>
        <taxon>Mycobacterium</taxon>
        <taxon>Mycobacterium tuberculosis complex</taxon>
    </lineage>
</organism>
<name>CSOR_MYCTU</name>
<proteinExistence type="evidence at protein level"/>
<protein>
    <recommendedName>
        <fullName>Copper-sensing transcriptional repressor CsoR</fullName>
    </recommendedName>
    <alternativeName>
        <fullName>Copper-sensitive operon repressor</fullName>
    </alternativeName>
</protein>